<comment type="function">
    <text evidence="1 4">Transcription factor. Interacts specifically with the W box (5'-(T)TGAC[CT]-3'), a frequently occurring elicitor-responsive cis-acting element (By similarity). Involved in defense responses. May act as positive regulator of salicylic acid (SA)-mediated signaling and negative regulator of jasmonic acid (JA)-mediated signaling (PubMed:21030507).</text>
</comment>
<comment type="subunit">
    <text evidence="5">Interacts with CAMBP25/VQ15.</text>
</comment>
<comment type="interaction">
    <interactant intactId="EBI-15214372">
        <id>Q93WU9</id>
    </interactant>
    <interactant intactId="EBI-530486">
        <id>P46639</id>
        <label>KNAT1</label>
    </interactant>
    <organismsDiffer>false</organismsDiffer>
    <experiments>3</experiments>
</comment>
<comment type="subcellular location">
    <subcellularLocation>
        <location evidence="6">Nucleus</location>
    </subcellularLocation>
</comment>
<comment type="disruption phenotype">
    <text evidence="4">No visible phenotype under normal growth conditions.</text>
</comment>
<comment type="similarity">
    <text evidence="6">Belongs to the WRKY group II-c family.</text>
</comment>
<comment type="sequence caution" evidence="6">
    <conflict type="erroneous gene model prediction">
        <sequence resource="EMBL-CDS" id="BAA97293"/>
    </conflict>
    <text>The predicted gene At5g64810 has been split into 3 genes: At5g64810, At5g64813 and At5g64816.</text>
</comment>
<reference key="1">
    <citation type="submission" date="2001-10" db="EMBL/GenBank/DDBJ databases">
        <authorList>
            <person name="Kushnir S."/>
            <person name="Ulker B."/>
            <person name="Somssich I.E."/>
        </authorList>
    </citation>
    <scope>NUCLEOTIDE SEQUENCE [MRNA]</scope>
    <source>
        <strain>cv. Columbia</strain>
        <tissue>Flower</tissue>
    </source>
</reference>
<reference key="2">
    <citation type="journal article" date="2000" name="DNA Res.">
        <title>Structural analysis of Arabidopsis thaliana chromosome 5. X. Sequence features of the regions of 3,076,755 bp covered by sixty P1 and TAC clones.</title>
        <authorList>
            <person name="Sato S."/>
            <person name="Nakamura Y."/>
            <person name="Kaneko T."/>
            <person name="Katoh T."/>
            <person name="Asamizu E."/>
            <person name="Kotani H."/>
            <person name="Tabata S."/>
        </authorList>
    </citation>
    <scope>NUCLEOTIDE SEQUENCE [LARGE SCALE GENOMIC DNA]</scope>
    <source>
        <strain>cv. Columbia</strain>
    </source>
</reference>
<reference key="3">
    <citation type="journal article" date="2017" name="Plant J.">
        <title>Araport11: a complete reannotation of the Arabidopsis thaliana reference genome.</title>
        <authorList>
            <person name="Cheng C.Y."/>
            <person name="Krishnakumar V."/>
            <person name="Chan A.P."/>
            <person name="Thibaud-Nissen F."/>
            <person name="Schobel S."/>
            <person name="Town C.D."/>
        </authorList>
    </citation>
    <scope>GENOME REANNOTATION</scope>
    <source>
        <strain>cv. Columbia</strain>
    </source>
</reference>
<reference key="4">
    <citation type="journal article" date="2011" name="Plant Physiol.">
        <title>Low oleic acid-derived repression of jasmonic acid-inducible defense responses requires the WRKY50 and WRKY51 proteins.</title>
        <authorList>
            <person name="Gao Q.M."/>
            <person name="Venugopal S."/>
            <person name="Navarre D."/>
            <person name="Kachroo A."/>
        </authorList>
    </citation>
    <scope>FUNCTION</scope>
    <scope>DISRUPTION PHENOTYPE</scope>
</reference>
<reference key="5">
    <citation type="journal article" date="2012" name="Plant Physiol.">
        <title>Structural and functional analysis of VQ motif-containing proteins in Arabidopsis as interacting proteins of WRKY transcription factors.</title>
        <authorList>
            <person name="Cheng Y."/>
            <person name="Zhou Y."/>
            <person name="Yang Y."/>
            <person name="Chi Y.J."/>
            <person name="Zhou J."/>
            <person name="Chen J.Y."/>
            <person name="Wang F."/>
            <person name="Fan B."/>
            <person name="Shi K."/>
            <person name="Zhou Y.H."/>
            <person name="Yu J.Q."/>
            <person name="Chen Z."/>
        </authorList>
    </citation>
    <scope>INTERACTION WITH CAMBP25/VQ15</scope>
</reference>
<evidence type="ECO:0000250" key="1"/>
<evidence type="ECO:0000255" key="2">
    <source>
        <dbReference type="PROSITE-ProRule" id="PRU00223"/>
    </source>
</evidence>
<evidence type="ECO:0000256" key="3">
    <source>
        <dbReference type="SAM" id="MobiDB-lite"/>
    </source>
</evidence>
<evidence type="ECO:0000269" key="4">
    <source>
    </source>
</evidence>
<evidence type="ECO:0000269" key="5">
    <source>
    </source>
</evidence>
<evidence type="ECO:0000305" key="6"/>
<organism>
    <name type="scientific">Arabidopsis thaliana</name>
    <name type="common">Mouse-ear cress</name>
    <dbReference type="NCBI Taxonomy" id="3702"/>
    <lineage>
        <taxon>Eukaryota</taxon>
        <taxon>Viridiplantae</taxon>
        <taxon>Streptophyta</taxon>
        <taxon>Embryophyta</taxon>
        <taxon>Tracheophyta</taxon>
        <taxon>Spermatophyta</taxon>
        <taxon>Magnoliopsida</taxon>
        <taxon>eudicotyledons</taxon>
        <taxon>Gunneridae</taxon>
        <taxon>Pentapetalae</taxon>
        <taxon>rosids</taxon>
        <taxon>malvids</taxon>
        <taxon>Brassicales</taxon>
        <taxon>Brassicaceae</taxon>
        <taxon>Camelineae</taxon>
        <taxon>Arabidopsis</taxon>
    </lineage>
</organism>
<feature type="chain" id="PRO_0000133692" description="Probable WRKY transcription factor 51">
    <location>
        <begin position="1"/>
        <end position="194"/>
    </location>
</feature>
<feature type="DNA-binding region" description="WRKY" evidence="2">
    <location>
        <begin position="104"/>
        <end position="169"/>
    </location>
</feature>
<feature type="region of interest" description="Disordered" evidence="3">
    <location>
        <begin position="58"/>
        <end position="97"/>
    </location>
</feature>
<feature type="compositionally biased region" description="Basic and acidic residues" evidence="3">
    <location>
        <begin position="76"/>
        <end position="96"/>
    </location>
</feature>
<sequence>MNISQNPSPNFTYFSDENFINPFMDNNDFSNLMFFDIDEGGNNGLIEEEISSPTSIVSSETFTGESGGSGSATTLSKKESTNRGSKESDQTKETGHRVAFRTRSKIDVMDDGFKWRKYGKKSVKNNINKRNYYKCSSEGCSVKKRVERDGDDAAYVITTYEGVHNHESLSNVYYNEMVLSYDHDNWNQHSLLRS</sequence>
<keyword id="KW-0238">DNA-binding</keyword>
<keyword id="KW-0539">Nucleus</keyword>
<keyword id="KW-0611">Plant defense</keyword>
<keyword id="KW-1185">Reference proteome</keyword>
<keyword id="KW-0804">Transcription</keyword>
<keyword id="KW-0805">Transcription regulation</keyword>
<accession>Q93WU9</accession>
<accession>Q9LV96</accession>
<name>WRK51_ARATH</name>
<proteinExistence type="evidence at protein level"/>
<gene>
    <name type="primary">WRKY51</name>
    <name type="ordered locus">At5g64810</name>
    <name type="ORF">MXK3.3</name>
</gene>
<dbReference type="EMBL" id="AF426252">
    <property type="protein sequence ID" value="AAL29429.1"/>
    <property type="molecule type" value="mRNA"/>
</dbReference>
<dbReference type="EMBL" id="AB019236">
    <property type="protein sequence ID" value="BAA97293.1"/>
    <property type="status" value="ALT_SEQ"/>
    <property type="molecule type" value="Genomic_DNA"/>
</dbReference>
<dbReference type="EMBL" id="CP002688">
    <property type="protein sequence ID" value="AED97953.1"/>
    <property type="molecule type" value="Genomic_DNA"/>
</dbReference>
<dbReference type="RefSeq" id="NP_568995.2">
    <property type="nucleotide sequence ID" value="NM_125877.4"/>
</dbReference>
<dbReference type="SMR" id="Q93WU9"/>
<dbReference type="BioGRID" id="21844">
    <property type="interactions" value="16"/>
</dbReference>
<dbReference type="FunCoup" id="Q93WU9">
    <property type="interactions" value="19"/>
</dbReference>
<dbReference type="IntAct" id="Q93WU9">
    <property type="interactions" value="6"/>
</dbReference>
<dbReference type="STRING" id="3702.Q93WU9"/>
<dbReference type="PaxDb" id="3702-AT5G64810.1"/>
<dbReference type="ProteomicsDB" id="234415"/>
<dbReference type="EnsemblPlants" id="AT5G64810.1">
    <property type="protein sequence ID" value="AT5G64810.1"/>
    <property type="gene ID" value="AT5G64810"/>
</dbReference>
<dbReference type="GeneID" id="836602"/>
<dbReference type="Gramene" id="AT5G64810.1">
    <property type="protein sequence ID" value="AT5G64810.1"/>
    <property type="gene ID" value="AT5G64810"/>
</dbReference>
<dbReference type="KEGG" id="ath:AT5G64810"/>
<dbReference type="Araport" id="AT5G64810"/>
<dbReference type="TAIR" id="AT5G64810">
    <property type="gene designation" value="WRKY51"/>
</dbReference>
<dbReference type="eggNOG" id="ENOG502S01U">
    <property type="taxonomic scope" value="Eukaryota"/>
</dbReference>
<dbReference type="HOGENOM" id="CLU_073202_3_0_1"/>
<dbReference type="InParanoid" id="Q93WU9"/>
<dbReference type="OMA" id="DHDNWNQ"/>
<dbReference type="PhylomeDB" id="Q93WU9"/>
<dbReference type="PRO" id="PR:Q93WU9"/>
<dbReference type="Proteomes" id="UP000006548">
    <property type="component" value="Chromosome 5"/>
</dbReference>
<dbReference type="ExpressionAtlas" id="Q93WU9">
    <property type="expression patterns" value="baseline and differential"/>
</dbReference>
<dbReference type="GO" id="GO:0005634">
    <property type="term" value="C:nucleus"/>
    <property type="evidence" value="ECO:0007669"/>
    <property type="project" value="UniProtKB-SubCell"/>
</dbReference>
<dbReference type="GO" id="GO:0003700">
    <property type="term" value="F:DNA-binding transcription factor activity"/>
    <property type="evidence" value="ECO:0000250"/>
    <property type="project" value="TAIR"/>
</dbReference>
<dbReference type="GO" id="GO:0043565">
    <property type="term" value="F:sequence-specific DNA binding"/>
    <property type="evidence" value="ECO:0007669"/>
    <property type="project" value="InterPro"/>
</dbReference>
<dbReference type="GO" id="GO:0042742">
    <property type="term" value="P:defense response to bacterium"/>
    <property type="evidence" value="ECO:0000316"/>
    <property type="project" value="TAIR"/>
</dbReference>
<dbReference type="GO" id="GO:0050832">
    <property type="term" value="P:defense response to fungus"/>
    <property type="evidence" value="ECO:0000316"/>
    <property type="project" value="TAIR"/>
</dbReference>
<dbReference type="GO" id="GO:0009867">
    <property type="term" value="P:jasmonic acid mediated signaling pathway"/>
    <property type="evidence" value="ECO:0000316"/>
    <property type="project" value="TAIR"/>
</dbReference>
<dbReference type="FunFam" id="2.20.25.80:FF:000003">
    <property type="entry name" value="WRKY transcription factor 57"/>
    <property type="match status" value="1"/>
</dbReference>
<dbReference type="Gene3D" id="2.20.25.80">
    <property type="entry name" value="WRKY domain"/>
    <property type="match status" value="1"/>
</dbReference>
<dbReference type="InterPro" id="IPR003657">
    <property type="entry name" value="WRKY_dom"/>
</dbReference>
<dbReference type="InterPro" id="IPR036576">
    <property type="entry name" value="WRKY_dom_sf"/>
</dbReference>
<dbReference type="InterPro" id="IPR044810">
    <property type="entry name" value="WRKY_plant"/>
</dbReference>
<dbReference type="PANTHER" id="PTHR31221:SF377">
    <property type="entry name" value="WRKY TRANSCRIPTION FACTOR 51-RELATED"/>
    <property type="match status" value="1"/>
</dbReference>
<dbReference type="PANTHER" id="PTHR31221">
    <property type="entry name" value="WRKY TRANSCRIPTION FACTOR PROTEIN 1-RELATED"/>
    <property type="match status" value="1"/>
</dbReference>
<dbReference type="Pfam" id="PF03106">
    <property type="entry name" value="WRKY"/>
    <property type="match status" value="1"/>
</dbReference>
<dbReference type="SMART" id="SM00774">
    <property type="entry name" value="WRKY"/>
    <property type="match status" value="1"/>
</dbReference>
<dbReference type="SUPFAM" id="SSF118290">
    <property type="entry name" value="WRKY DNA-binding domain"/>
    <property type="match status" value="1"/>
</dbReference>
<dbReference type="PROSITE" id="PS50811">
    <property type="entry name" value="WRKY"/>
    <property type="match status" value="1"/>
</dbReference>
<protein>
    <recommendedName>
        <fullName>Probable WRKY transcription factor 51</fullName>
    </recommendedName>
    <alternativeName>
        <fullName>WRKY DNA-binding protein 51</fullName>
    </alternativeName>
</protein>